<organism>
    <name type="scientific">Pongo abelii</name>
    <name type="common">Sumatran orangutan</name>
    <name type="synonym">Pongo pygmaeus abelii</name>
    <dbReference type="NCBI Taxonomy" id="9601"/>
    <lineage>
        <taxon>Eukaryota</taxon>
        <taxon>Metazoa</taxon>
        <taxon>Chordata</taxon>
        <taxon>Craniata</taxon>
        <taxon>Vertebrata</taxon>
        <taxon>Euteleostomi</taxon>
        <taxon>Mammalia</taxon>
        <taxon>Eutheria</taxon>
        <taxon>Euarchontoglires</taxon>
        <taxon>Primates</taxon>
        <taxon>Haplorrhini</taxon>
        <taxon>Catarrhini</taxon>
        <taxon>Hominidae</taxon>
        <taxon>Pongo</taxon>
    </lineage>
</organism>
<name>COX5B_PONAB</name>
<protein>
    <recommendedName>
        <fullName>Cytochrome c oxidase subunit 5B, mitochondrial</fullName>
    </recommendedName>
    <alternativeName>
        <fullName>Cytochrome c oxidase polypeptide Vb</fullName>
    </alternativeName>
</protein>
<gene>
    <name type="primary">COX5B</name>
</gene>
<comment type="function">
    <text evidence="2">Component of the cytochrome c oxidase, the last enzyme in the mitochondrial electron transport chain which drives oxidative phosphorylation. The respiratory chain contains 3 multisubunit complexes succinate dehydrogenase (complex II, CII), ubiquinol-cytochrome c oxidoreductase (cytochrome b-c1 complex, complex III, CIII) and cytochrome c oxidase (complex IV, CIV), that cooperate to transfer electrons derived from NADH and succinate to molecular oxygen, creating an electrochemical gradient over the inner membrane that drives transmembrane transport and the ATP synthase. Cytochrome c oxidase is the component of the respiratory chain that catalyzes the reduction of oxygen to water. Electrons originating from reduced cytochrome c in the intermembrane space (IMS) are transferred via the dinuclear copper A center (CU(A)) of subunit 2 and heme A of subunit 1 to the active site in subunit 1, a binuclear center (BNC) formed by heme A3 and copper B (CU(B)). The BNC reduces molecular oxygen to 2 water molecules using 4 electrons from cytochrome c in the IMS and 4 protons from the mitochondrial matrix.</text>
</comment>
<comment type="pathway">
    <text evidence="2">Energy metabolism; oxidative phosphorylation.</text>
</comment>
<comment type="subunit">
    <text evidence="1">Component of the cytochrome c oxidase (complex IV, CIV), a multisubunit enzyme composed of 14 subunits. The complex is composed of a catalytic core of 3 subunits MT-CO1, MT-CO2 and MT-CO3, encoded in the mitochondrial DNA, and 11 supernumerary subunits COX4I, COX5A, COX5B, COX6A, COX6B, COX6C, COX7A, COX7B, COX7C, COX8 and NDUFA4, which are encoded in the nuclear genome. The complex exists as a monomer or a dimer and forms supercomplexes (SCs) in the inner mitochondrial membrane with NADH-ubiquinone oxidoreductase (complex I, CI) and ubiquinol-cytochrome c oxidoreductase (cytochrome b-c1 complex, complex III, CIII), resulting in different assemblies (supercomplex SCI(1)III(2)IV(1) and megacomplex MCI(2)III(2)IV(2)).</text>
</comment>
<comment type="subcellular location">
    <subcellularLocation>
        <location evidence="1">Mitochondrion inner membrane</location>
        <topology evidence="1">Peripheral membrane protein</topology>
        <orientation evidence="1">Matrix side</orientation>
    </subcellularLocation>
</comment>
<comment type="similarity">
    <text evidence="5">Belongs to the cytochrome c oxidase subunit 5B family.</text>
</comment>
<proteinExistence type="evidence at transcript level"/>
<dbReference type="EMBL" id="CR857567">
    <property type="protein sequence ID" value="CAH89845.1"/>
    <property type="molecule type" value="mRNA"/>
</dbReference>
<dbReference type="RefSeq" id="NP_001124857.1">
    <property type="nucleotide sequence ID" value="NM_001131385.1"/>
</dbReference>
<dbReference type="SMR" id="Q5REG2"/>
<dbReference type="FunCoup" id="Q5REG2">
    <property type="interactions" value="1565"/>
</dbReference>
<dbReference type="STRING" id="9601.ENSPPYP00000013467"/>
<dbReference type="eggNOG" id="KOG3352">
    <property type="taxonomic scope" value="Eukaryota"/>
</dbReference>
<dbReference type="HOGENOM" id="CLU_127178_0_0_1"/>
<dbReference type="InParanoid" id="Q5REG2"/>
<dbReference type="OrthoDB" id="10249250at2759"/>
<dbReference type="UniPathway" id="UPA00705"/>
<dbReference type="Proteomes" id="UP000001595">
    <property type="component" value="Unplaced"/>
</dbReference>
<dbReference type="GO" id="GO:0005743">
    <property type="term" value="C:mitochondrial inner membrane"/>
    <property type="evidence" value="ECO:0007669"/>
    <property type="project" value="UniProtKB-SubCell"/>
</dbReference>
<dbReference type="GO" id="GO:0045277">
    <property type="term" value="C:respiratory chain complex IV"/>
    <property type="evidence" value="ECO:0007669"/>
    <property type="project" value="InterPro"/>
</dbReference>
<dbReference type="GO" id="GO:0046872">
    <property type="term" value="F:metal ion binding"/>
    <property type="evidence" value="ECO:0007669"/>
    <property type="project" value="UniProtKB-KW"/>
</dbReference>
<dbReference type="GO" id="GO:0006123">
    <property type="term" value="P:mitochondrial electron transport, cytochrome c to oxygen"/>
    <property type="evidence" value="ECO:0007669"/>
    <property type="project" value="InterPro"/>
</dbReference>
<dbReference type="CDD" id="cd00924">
    <property type="entry name" value="Cyt_c_Oxidase_Vb"/>
    <property type="match status" value="1"/>
</dbReference>
<dbReference type="FunFam" id="2.60.11.10:FF:000001">
    <property type="entry name" value="Cytochrome c oxidase subunit 5B, mitochondrial"/>
    <property type="match status" value="1"/>
</dbReference>
<dbReference type="Gene3D" id="2.60.11.10">
    <property type="entry name" value="Cytochrome c oxidase, subunit Vb"/>
    <property type="match status" value="1"/>
</dbReference>
<dbReference type="InterPro" id="IPR002124">
    <property type="entry name" value="Cyt_c_oxidase_su5b"/>
</dbReference>
<dbReference type="InterPro" id="IPR036972">
    <property type="entry name" value="Cyt_c_oxidase_su5b_sf"/>
</dbReference>
<dbReference type="PANTHER" id="PTHR10122">
    <property type="entry name" value="CYTOCHROME C OXIDASE SUBUNIT 5B, MITOCHONDRIAL"/>
    <property type="match status" value="1"/>
</dbReference>
<dbReference type="PANTHER" id="PTHR10122:SF20">
    <property type="entry name" value="CYTOCHROME C OXIDASE SUBUNIT 5B, MITOCHONDRIAL"/>
    <property type="match status" value="1"/>
</dbReference>
<dbReference type="Pfam" id="PF01215">
    <property type="entry name" value="COX5B"/>
    <property type="match status" value="1"/>
</dbReference>
<dbReference type="SUPFAM" id="SSF57802">
    <property type="entry name" value="Rubredoxin-like"/>
    <property type="match status" value="1"/>
</dbReference>
<dbReference type="PROSITE" id="PS00848">
    <property type="entry name" value="COX5B_1"/>
    <property type="match status" value="1"/>
</dbReference>
<dbReference type="PROSITE" id="PS51359">
    <property type="entry name" value="COX5B_2"/>
    <property type="match status" value="1"/>
</dbReference>
<feature type="transit peptide" description="Mitochondrion">
    <location>
        <begin position="1"/>
        <end position="31"/>
    </location>
</feature>
<feature type="chain" id="PRO_0000041875" description="Cytochrome c oxidase subunit 5B, mitochondrial">
    <location>
        <begin position="32"/>
        <end position="129"/>
    </location>
</feature>
<feature type="binding site" evidence="4">
    <location>
        <position position="91"/>
    </location>
    <ligand>
        <name>Zn(2+)</name>
        <dbReference type="ChEBI" id="CHEBI:29105"/>
    </ligand>
</feature>
<feature type="binding site" evidence="4">
    <location>
        <position position="93"/>
    </location>
    <ligand>
        <name>Zn(2+)</name>
        <dbReference type="ChEBI" id="CHEBI:29105"/>
    </ligand>
</feature>
<feature type="binding site" evidence="4">
    <location>
        <position position="113"/>
    </location>
    <ligand>
        <name>Zn(2+)</name>
        <dbReference type="ChEBI" id="CHEBI:29105"/>
    </ligand>
</feature>
<feature type="binding site" evidence="4">
    <location>
        <position position="116"/>
    </location>
    <ligand>
        <name>Zn(2+)</name>
        <dbReference type="ChEBI" id="CHEBI:29105"/>
    </ligand>
</feature>
<feature type="modified residue" description="N6-acetyllysine" evidence="3">
    <location>
        <position position="68"/>
    </location>
</feature>
<feature type="modified residue" description="N6-acetyllysine" evidence="3">
    <location>
        <position position="86"/>
    </location>
</feature>
<feature type="modified residue" description="N6-acetyllysine" evidence="3">
    <location>
        <position position="121"/>
    </location>
</feature>
<evidence type="ECO:0000250" key="1">
    <source>
        <dbReference type="UniProtKB" id="P00428"/>
    </source>
</evidence>
<evidence type="ECO:0000250" key="2">
    <source>
        <dbReference type="UniProtKB" id="P04037"/>
    </source>
</evidence>
<evidence type="ECO:0000250" key="3">
    <source>
        <dbReference type="UniProtKB" id="P19536"/>
    </source>
</evidence>
<evidence type="ECO:0000255" key="4">
    <source>
        <dbReference type="PROSITE-ProRule" id="PRU00692"/>
    </source>
</evidence>
<evidence type="ECO:0000305" key="5"/>
<sequence>MASRLLRGAGALAAQALRARGPSGAAAVRSMASGGGVPTDEEQATGLEREIMLAAKKGLDPYNVLAPKGASGTREDPNLVPSISNKRIVGCICEEDNTSVVWFWLHKGEAQRCPRCGAHYKLVPQQLAH</sequence>
<reference key="1">
    <citation type="submission" date="2004-11" db="EMBL/GenBank/DDBJ databases">
        <authorList>
            <consortium name="The German cDNA consortium"/>
        </authorList>
    </citation>
    <scope>NUCLEOTIDE SEQUENCE [LARGE SCALE MRNA]</scope>
    <source>
        <tissue>Heart</tissue>
    </source>
</reference>
<keyword id="KW-0007">Acetylation</keyword>
<keyword id="KW-0472">Membrane</keyword>
<keyword id="KW-0479">Metal-binding</keyword>
<keyword id="KW-0496">Mitochondrion</keyword>
<keyword id="KW-0999">Mitochondrion inner membrane</keyword>
<keyword id="KW-1185">Reference proteome</keyword>
<keyword id="KW-0809">Transit peptide</keyword>
<keyword id="KW-0862">Zinc</keyword>
<accession>Q5REG2</accession>